<keyword id="KW-0027">Amidation</keyword>
<keyword id="KW-0903">Direct protein sequencing</keyword>
<keyword id="KW-1015">Disulfide bond</keyword>
<keyword id="KW-0872">Ion channel impairing toxin</keyword>
<keyword id="KW-0528">Neurotoxin</keyword>
<keyword id="KW-0964">Secreted</keyword>
<keyword id="KW-0800">Toxin</keyword>
<keyword id="KW-0738">Voltage-gated sodium channel impairing toxin</keyword>
<name>SCX4_CENBO</name>
<proteinExistence type="evidence at protein level"/>
<sequence>KEGYIVDYHTGCKYTCAKLGDNDYCVRECRLRYYQSAHGYCYAFACWCTHLYEQAVVWPLPNKRCK</sequence>
<feature type="chain" id="PRO_0000461092" description="Beta-toxin Cbo4">
    <location>
        <begin position="1"/>
        <end position="66"/>
    </location>
</feature>
<feature type="domain" description="LCN-type CS-alpha/beta" evidence="2">
    <location>
        <begin position="1"/>
        <end position="66"/>
    </location>
</feature>
<feature type="modified residue" description="Lysine amide" evidence="1">
    <location>
        <position position="66"/>
    </location>
</feature>
<feature type="disulfide bond" evidence="2">
    <location>
        <begin position="12"/>
        <end position="65"/>
    </location>
</feature>
<feature type="disulfide bond" evidence="2">
    <location>
        <begin position="16"/>
        <end position="41"/>
    </location>
</feature>
<feature type="disulfide bond" evidence="2">
    <location>
        <begin position="25"/>
        <end position="46"/>
    </location>
</feature>
<feature type="disulfide bond" evidence="2">
    <location>
        <begin position="29"/>
        <end position="48"/>
    </location>
</feature>
<dbReference type="SMR" id="C0HMA6"/>
<dbReference type="GO" id="GO:0005576">
    <property type="term" value="C:extracellular region"/>
    <property type="evidence" value="ECO:0007669"/>
    <property type="project" value="UniProtKB-SubCell"/>
</dbReference>
<dbReference type="GO" id="GO:0019871">
    <property type="term" value="F:sodium channel inhibitor activity"/>
    <property type="evidence" value="ECO:0007669"/>
    <property type="project" value="InterPro"/>
</dbReference>
<dbReference type="GO" id="GO:0090729">
    <property type="term" value="F:toxin activity"/>
    <property type="evidence" value="ECO:0007669"/>
    <property type="project" value="UniProtKB-KW"/>
</dbReference>
<dbReference type="GO" id="GO:0006952">
    <property type="term" value="P:defense response"/>
    <property type="evidence" value="ECO:0007669"/>
    <property type="project" value="InterPro"/>
</dbReference>
<dbReference type="CDD" id="cd23106">
    <property type="entry name" value="neurotoxins_LC_scorpion"/>
    <property type="match status" value="1"/>
</dbReference>
<dbReference type="FunFam" id="3.30.30.10:FF:000002">
    <property type="entry name" value="Alpha-like toxin BmK-M1"/>
    <property type="match status" value="1"/>
</dbReference>
<dbReference type="Gene3D" id="3.30.30.10">
    <property type="entry name" value="Knottin, scorpion toxin-like"/>
    <property type="match status" value="1"/>
</dbReference>
<dbReference type="InterPro" id="IPR044062">
    <property type="entry name" value="LCN-type_CS_alpha_beta_dom"/>
</dbReference>
<dbReference type="InterPro" id="IPR003614">
    <property type="entry name" value="Scorpion_toxin-like"/>
</dbReference>
<dbReference type="InterPro" id="IPR036574">
    <property type="entry name" value="Scorpion_toxin-like_sf"/>
</dbReference>
<dbReference type="InterPro" id="IPR018218">
    <property type="entry name" value="Scorpion_toxinL"/>
</dbReference>
<dbReference type="InterPro" id="IPR002061">
    <property type="entry name" value="Scorpion_toxinL/defensin"/>
</dbReference>
<dbReference type="Pfam" id="PF00537">
    <property type="entry name" value="Toxin_3"/>
    <property type="match status" value="1"/>
</dbReference>
<dbReference type="PRINTS" id="PR00285">
    <property type="entry name" value="SCORPNTOXIN"/>
</dbReference>
<dbReference type="SMART" id="SM00505">
    <property type="entry name" value="Knot1"/>
    <property type="match status" value="1"/>
</dbReference>
<dbReference type="SUPFAM" id="SSF57095">
    <property type="entry name" value="Scorpion toxin-like"/>
    <property type="match status" value="1"/>
</dbReference>
<dbReference type="PROSITE" id="PS51863">
    <property type="entry name" value="LCN_CSAB"/>
    <property type="match status" value="1"/>
</dbReference>
<evidence type="ECO:0000250" key="1">
    <source>
        <dbReference type="UniProtKB" id="C0HK69"/>
    </source>
</evidence>
<evidence type="ECO:0000255" key="2">
    <source>
        <dbReference type="PROSITE-ProRule" id="PRU01210"/>
    </source>
</evidence>
<evidence type="ECO:0000269" key="3">
    <source>
    </source>
</evidence>
<evidence type="ECO:0000303" key="4">
    <source>
    </source>
</evidence>
<evidence type="ECO:0000305" key="5"/>
<evidence type="ECO:0000305" key="6">
    <source>
    </source>
</evidence>
<accession>C0HMA6</accession>
<reference evidence="5" key="1">
    <citation type="journal article" date="2024" name="Toxins">
        <title>Characterization of Sodium Channel Peptides Obtained from the Venom of the Scorpion Centruroides bonito.</title>
        <authorList>
            <person name="Restano-Cassulini R."/>
            <person name="Olamendi-Portugal T."/>
            <person name="Riano-Umbarila L."/>
            <person name="Zamudio F.Z."/>
            <person name="Delgado-Prudencio G."/>
            <person name="Becerril B."/>
            <person name="Possani L.D."/>
        </authorList>
    </citation>
    <scope>PROTEIN SEQUENCE</scope>
    <scope>FUNCTION</scope>
    <scope>SUBCELLULAR LOCATION</scope>
    <scope>TISSUE SPECIFICITY</scope>
    <scope>MASS SPECTROMETRY</scope>
    <source>
        <tissue evidence="4">Venom</tissue>
    </source>
</reference>
<comment type="function">
    <text evidence="3">Beta toxins bind voltage-independently at site-4 of sodium channels and shift the voltage of activation toward more negative potentials thereby affecting sodium channel activation and promoting spontaneous and repetitive firing (PubMed:38535792). Is active on the human voltage-gated sodium channels Nav1.4/SCN4A, Nav1.5/SCN5A and Nav1.6/SCN8A when tested at 200 nM (PubMed:38535792). In vivo, is toxic to mice when intraperitoneally injected (PubMed:38535792).</text>
</comment>
<comment type="subcellular location">
    <subcellularLocation>
        <location evidence="3">Secreted</location>
    </subcellularLocation>
</comment>
<comment type="tissue specificity">
    <text evidence="6">Expressed by the venom gland.</text>
</comment>
<comment type="domain">
    <text evidence="5">Has the structural arrangement of an alpha-helix connected to antiparallel beta-sheets by disulfide bonds (CS-alpha/beta).</text>
</comment>
<comment type="mass spectrometry"/>
<comment type="miscellaneous">
    <text evidence="3">Negative results: does not modify the currents of the human voltage-gated sodium channels Nav1.1/SCN1A, Nav1.2/SCN2A, Nav1.3/SCN3A and Nav1.7/SCN9A.</text>
</comment>
<comment type="similarity">
    <text evidence="5">Belongs to the long (4 C-C) scorpion toxin superfamily. Sodium channel inhibitor family. Beta subfamily.</text>
</comment>
<protein>
    <recommendedName>
        <fullName evidence="5">Beta-toxin Cbo4</fullName>
        <shortName evidence="4">Cbo4</shortName>
    </recommendedName>
</protein>
<organism>
    <name type="scientific">Centruroides bonito</name>
    <name type="common">Scorpion</name>
    <dbReference type="NCBI Taxonomy" id="3035065"/>
    <lineage>
        <taxon>Eukaryota</taxon>
        <taxon>Metazoa</taxon>
        <taxon>Ecdysozoa</taxon>
        <taxon>Arthropoda</taxon>
        <taxon>Chelicerata</taxon>
        <taxon>Arachnida</taxon>
        <taxon>Scorpiones</taxon>
        <taxon>Buthida</taxon>
        <taxon>Buthoidea</taxon>
        <taxon>Buthidae</taxon>
        <taxon>Centruroides</taxon>
    </lineage>
</organism>